<reference key="1">
    <citation type="journal article" date="2009" name="PLoS ONE">
        <title>Genome analysis of the anaerobic thermohalophilic bacterium Halothermothrix orenii.</title>
        <authorList>
            <person name="Mavromatis K."/>
            <person name="Ivanova N."/>
            <person name="Anderson I."/>
            <person name="Lykidis A."/>
            <person name="Hooper S.D."/>
            <person name="Sun H."/>
            <person name="Kunin V."/>
            <person name="Lapidus A."/>
            <person name="Hugenholtz P."/>
            <person name="Patel B."/>
            <person name="Kyrpides N.C."/>
        </authorList>
    </citation>
    <scope>NUCLEOTIDE SEQUENCE [LARGE SCALE GENOMIC DNA]</scope>
    <source>
        <strain>H 168 / OCM 544 / DSM 9562</strain>
    </source>
</reference>
<protein>
    <recommendedName>
        <fullName evidence="1">GTPase Era</fullName>
    </recommendedName>
</protein>
<name>ERA_HALOH</name>
<feature type="chain" id="PRO_1000205545" description="GTPase Era">
    <location>
        <begin position="1"/>
        <end position="294"/>
    </location>
</feature>
<feature type="domain" description="Era-type G" evidence="2">
    <location>
        <begin position="4"/>
        <end position="170"/>
    </location>
</feature>
<feature type="domain" description="KH type-2" evidence="1">
    <location>
        <begin position="201"/>
        <end position="278"/>
    </location>
</feature>
<feature type="region of interest" description="G1" evidence="2">
    <location>
        <begin position="12"/>
        <end position="19"/>
    </location>
</feature>
<feature type="region of interest" description="G2" evidence="2">
    <location>
        <begin position="38"/>
        <end position="42"/>
    </location>
</feature>
<feature type="region of interest" description="G3" evidence="2">
    <location>
        <begin position="59"/>
        <end position="62"/>
    </location>
</feature>
<feature type="region of interest" description="G4" evidence="2">
    <location>
        <begin position="121"/>
        <end position="124"/>
    </location>
</feature>
<feature type="region of interest" description="G5" evidence="2">
    <location>
        <begin position="149"/>
        <end position="151"/>
    </location>
</feature>
<feature type="binding site" evidence="1">
    <location>
        <begin position="12"/>
        <end position="19"/>
    </location>
    <ligand>
        <name>GTP</name>
        <dbReference type="ChEBI" id="CHEBI:37565"/>
    </ligand>
</feature>
<feature type="binding site" evidence="1">
    <location>
        <begin position="59"/>
        <end position="63"/>
    </location>
    <ligand>
        <name>GTP</name>
        <dbReference type="ChEBI" id="CHEBI:37565"/>
    </ligand>
</feature>
<feature type="binding site" evidence="1">
    <location>
        <begin position="121"/>
        <end position="124"/>
    </location>
    <ligand>
        <name>GTP</name>
        <dbReference type="ChEBI" id="CHEBI:37565"/>
    </ligand>
</feature>
<accession>B8CXI2</accession>
<proteinExistence type="inferred from homology"/>
<comment type="function">
    <text evidence="1">An essential GTPase that binds both GDP and GTP, with rapid nucleotide exchange. Plays a role in 16S rRNA processing and 30S ribosomal subunit biogenesis and possibly also in cell cycle regulation and energy metabolism.</text>
</comment>
<comment type="subunit">
    <text evidence="1">Monomer.</text>
</comment>
<comment type="subcellular location">
    <subcellularLocation>
        <location>Cytoplasm</location>
    </subcellularLocation>
    <subcellularLocation>
        <location evidence="1">Cell inner membrane</location>
        <topology evidence="1">Peripheral membrane protein</topology>
    </subcellularLocation>
</comment>
<comment type="similarity">
    <text evidence="1 2">Belongs to the TRAFAC class TrmE-Era-EngA-EngB-Septin-like GTPase superfamily. Era GTPase family.</text>
</comment>
<organism>
    <name type="scientific">Halothermothrix orenii (strain H 168 / OCM 544 / DSM 9562)</name>
    <dbReference type="NCBI Taxonomy" id="373903"/>
    <lineage>
        <taxon>Bacteria</taxon>
        <taxon>Bacillati</taxon>
        <taxon>Bacillota</taxon>
        <taxon>Clostridia</taxon>
        <taxon>Halanaerobiales</taxon>
        <taxon>Halothermotrichaceae</taxon>
        <taxon>Halothermothrix</taxon>
    </lineage>
</organism>
<keyword id="KW-0997">Cell inner membrane</keyword>
<keyword id="KW-1003">Cell membrane</keyword>
<keyword id="KW-0963">Cytoplasm</keyword>
<keyword id="KW-0342">GTP-binding</keyword>
<keyword id="KW-0472">Membrane</keyword>
<keyword id="KW-0547">Nucleotide-binding</keyword>
<keyword id="KW-1185">Reference proteome</keyword>
<keyword id="KW-0690">Ribosome biogenesis</keyword>
<keyword id="KW-0694">RNA-binding</keyword>
<keyword id="KW-0699">rRNA-binding</keyword>
<evidence type="ECO:0000255" key="1">
    <source>
        <dbReference type="HAMAP-Rule" id="MF_00367"/>
    </source>
</evidence>
<evidence type="ECO:0000255" key="2">
    <source>
        <dbReference type="PROSITE-ProRule" id="PRU01050"/>
    </source>
</evidence>
<gene>
    <name evidence="1" type="primary">era</name>
    <name type="ordered locus">Hore_12510</name>
</gene>
<dbReference type="EMBL" id="CP001098">
    <property type="protein sequence ID" value="ACL70001.1"/>
    <property type="molecule type" value="Genomic_DNA"/>
</dbReference>
<dbReference type="RefSeq" id="WP_012636185.1">
    <property type="nucleotide sequence ID" value="NC_011899.1"/>
</dbReference>
<dbReference type="SMR" id="B8CXI2"/>
<dbReference type="STRING" id="373903.Hore_12510"/>
<dbReference type="KEGG" id="hor:Hore_12510"/>
<dbReference type="eggNOG" id="COG1159">
    <property type="taxonomic scope" value="Bacteria"/>
</dbReference>
<dbReference type="HOGENOM" id="CLU_038009_1_0_9"/>
<dbReference type="OrthoDB" id="9805918at2"/>
<dbReference type="Proteomes" id="UP000000719">
    <property type="component" value="Chromosome"/>
</dbReference>
<dbReference type="GO" id="GO:0005829">
    <property type="term" value="C:cytosol"/>
    <property type="evidence" value="ECO:0007669"/>
    <property type="project" value="TreeGrafter"/>
</dbReference>
<dbReference type="GO" id="GO:0005886">
    <property type="term" value="C:plasma membrane"/>
    <property type="evidence" value="ECO:0007669"/>
    <property type="project" value="UniProtKB-SubCell"/>
</dbReference>
<dbReference type="GO" id="GO:0005525">
    <property type="term" value="F:GTP binding"/>
    <property type="evidence" value="ECO:0007669"/>
    <property type="project" value="UniProtKB-UniRule"/>
</dbReference>
<dbReference type="GO" id="GO:0003924">
    <property type="term" value="F:GTPase activity"/>
    <property type="evidence" value="ECO:0007669"/>
    <property type="project" value="UniProtKB-UniRule"/>
</dbReference>
<dbReference type="GO" id="GO:0043024">
    <property type="term" value="F:ribosomal small subunit binding"/>
    <property type="evidence" value="ECO:0007669"/>
    <property type="project" value="TreeGrafter"/>
</dbReference>
<dbReference type="GO" id="GO:0070181">
    <property type="term" value="F:small ribosomal subunit rRNA binding"/>
    <property type="evidence" value="ECO:0007669"/>
    <property type="project" value="UniProtKB-UniRule"/>
</dbReference>
<dbReference type="GO" id="GO:0000028">
    <property type="term" value="P:ribosomal small subunit assembly"/>
    <property type="evidence" value="ECO:0007669"/>
    <property type="project" value="TreeGrafter"/>
</dbReference>
<dbReference type="CDD" id="cd04163">
    <property type="entry name" value="Era"/>
    <property type="match status" value="1"/>
</dbReference>
<dbReference type="CDD" id="cd22534">
    <property type="entry name" value="KH-II_Era"/>
    <property type="match status" value="1"/>
</dbReference>
<dbReference type="FunFam" id="3.30.300.20:FF:000003">
    <property type="entry name" value="GTPase Era"/>
    <property type="match status" value="1"/>
</dbReference>
<dbReference type="FunFam" id="3.40.50.300:FF:000094">
    <property type="entry name" value="GTPase Era"/>
    <property type="match status" value="1"/>
</dbReference>
<dbReference type="Gene3D" id="3.30.300.20">
    <property type="match status" value="1"/>
</dbReference>
<dbReference type="Gene3D" id="3.40.50.300">
    <property type="entry name" value="P-loop containing nucleotide triphosphate hydrolases"/>
    <property type="match status" value="1"/>
</dbReference>
<dbReference type="HAMAP" id="MF_00367">
    <property type="entry name" value="GTPase_Era"/>
    <property type="match status" value="1"/>
</dbReference>
<dbReference type="InterPro" id="IPR030388">
    <property type="entry name" value="G_ERA_dom"/>
</dbReference>
<dbReference type="InterPro" id="IPR006073">
    <property type="entry name" value="GTP-bd"/>
</dbReference>
<dbReference type="InterPro" id="IPR005662">
    <property type="entry name" value="GTPase_Era-like"/>
</dbReference>
<dbReference type="InterPro" id="IPR015946">
    <property type="entry name" value="KH_dom-like_a/b"/>
</dbReference>
<dbReference type="InterPro" id="IPR004044">
    <property type="entry name" value="KH_dom_type_2"/>
</dbReference>
<dbReference type="InterPro" id="IPR009019">
    <property type="entry name" value="KH_sf_prok-type"/>
</dbReference>
<dbReference type="InterPro" id="IPR027417">
    <property type="entry name" value="P-loop_NTPase"/>
</dbReference>
<dbReference type="InterPro" id="IPR005225">
    <property type="entry name" value="Small_GTP-bd"/>
</dbReference>
<dbReference type="NCBIfam" id="TIGR00436">
    <property type="entry name" value="era"/>
    <property type="match status" value="1"/>
</dbReference>
<dbReference type="NCBIfam" id="NF000908">
    <property type="entry name" value="PRK00089.1"/>
    <property type="match status" value="1"/>
</dbReference>
<dbReference type="NCBIfam" id="TIGR00231">
    <property type="entry name" value="small_GTP"/>
    <property type="match status" value="1"/>
</dbReference>
<dbReference type="PANTHER" id="PTHR42698">
    <property type="entry name" value="GTPASE ERA"/>
    <property type="match status" value="1"/>
</dbReference>
<dbReference type="PANTHER" id="PTHR42698:SF1">
    <property type="entry name" value="GTPASE ERA, MITOCHONDRIAL"/>
    <property type="match status" value="1"/>
</dbReference>
<dbReference type="Pfam" id="PF07650">
    <property type="entry name" value="KH_2"/>
    <property type="match status" value="1"/>
</dbReference>
<dbReference type="Pfam" id="PF01926">
    <property type="entry name" value="MMR_HSR1"/>
    <property type="match status" value="1"/>
</dbReference>
<dbReference type="PRINTS" id="PR00326">
    <property type="entry name" value="GTP1OBG"/>
</dbReference>
<dbReference type="SUPFAM" id="SSF52540">
    <property type="entry name" value="P-loop containing nucleoside triphosphate hydrolases"/>
    <property type="match status" value="1"/>
</dbReference>
<dbReference type="SUPFAM" id="SSF54814">
    <property type="entry name" value="Prokaryotic type KH domain (KH-domain type II)"/>
    <property type="match status" value="1"/>
</dbReference>
<dbReference type="PROSITE" id="PS51713">
    <property type="entry name" value="G_ERA"/>
    <property type="match status" value="1"/>
</dbReference>
<dbReference type="PROSITE" id="PS50823">
    <property type="entry name" value="KH_TYPE_2"/>
    <property type="match status" value="1"/>
</dbReference>
<sequence>MSYKSGFVSVIGRPNVGKSTLINNLIGQKVVITSPRPQTTRNSVRGIYTRPEGQIVFVDTPGIHKARNKLDNYMLEKAYESLEDIDVIIFMVDGNYSFGKGDEFIYNQIKGVRVPVIVAMNKIDRINKEIVMERQKNYEERTGFPVIPISASRGTNLDTLVEEIFTFLPEGPQYYPEDMVTDQIEQFVVAELIREKVFILTREEVPYGVAVKIEEMKERDNSTMYIRANIYAEKKSHKKIIIGHKGKMIKKIGRLAREEIEKLLQTKVYLDLWVKIEKDWREKEGLVKRMGYKG</sequence>